<reference key="1">
    <citation type="journal article" date="1997" name="Nature">
        <title>The complete genome sequence of the Gram-positive bacterium Bacillus subtilis.</title>
        <authorList>
            <person name="Kunst F."/>
            <person name="Ogasawara N."/>
            <person name="Moszer I."/>
            <person name="Albertini A.M."/>
            <person name="Alloni G."/>
            <person name="Azevedo V."/>
            <person name="Bertero M.G."/>
            <person name="Bessieres P."/>
            <person name="Bolotin A."/>
            <person name="Borchert S."/>
            <person name="Borriss R."/>
            <person name="Boursier L."/>
            <person name="Brans A."/>
            <person name="Braun M."/>
            <person name="Brignell S.C."/>
            <person name="Bron S."/>
            <person name="Brouillet S."/>
            <person name="Bruschi C.V."/>
            <person name="Caldwell B."/>
            <person name="Capuano V."/>
            <person name="Carter N.M."/>
            <person name="Choi S.-K."/>
            <person name="Codani J.-J."/>
            <person name="Connerton I.F."/>
            <person name="Cummings N.J."/>
            <person name="Daniel R.A."/>
            <person name="Denizot F."/>
            <person name="Devine K.M."/>
            <person name="Duesterhoeft A."/>
            <person name="Ehrlich S.D."/>
            <person name="Emmerson P.T."/>
            <person name="Entian K.-D."/>
            <person name="Errington J."/>
            <person name="Fabret C."/>
            <person name="Ferrari E."/>
            <person name="Foulger D."/>
            <person name="Fritz C."/>
            <person name="Fujita M."/>
            <person name="Fujita Y."/>
            <person name="Fuma S."/>
            <person name="Galizzi A."/>
            <person name="Galleron N."/>
            <person name="Ghim S.-Y."/>
            <person name="Glaser P."/>
            <person name="Goffeau A."/>
            <person name="Golightly E.J."/>
            <person name="Grandi G."/>
            <person name="Guiseppi G."/>
            <person name="Guy B.J."/>
            <person name="Haga K."/>
            <person name="Haiech J."/>
            <person name="Harwood C.R."/>
            <person name="Henaut A."/>
            <person name="Hilbert H."/>
            <person name="Holsappel S."/>
            <person name="Hosono S."/>
            <person name="Hullo M.-F."/>
            <person name="Itaya M."/>
            <person name="Jones L.-M."/>
            <person name="Joris B."/>
            <person name="Karamata D."/>
            <person name="Kasahara Y."/>
            <person name="Klaerr-Blanchard M."/>
            <person name="Klein C."/>
            <person name="Kobayashi Y."/>
            <person name="Koetter P."/>
            <person name="Koningstein G."/>
            <person name="Krogh S."/>
            <person name="Kumano M."/>
            <person name="Kurita K."/>
            <person name="Lapidus A."/>
            <person name="Lardinois S."/>
            <person name="Lauber J."/>
            <person name="Lazarevic V."/>
            <person name="Lee S.-M."/>
            <person name="Levine A."/>
            <person name="Liu H."/>
            <person name="Masuda S."/>
            <person name="Mauel C."/>
            <person name="Medigue C."/>
            <person name="Medina N."/>
            <person name="Mellado R.P."/>
            <person name="Mizuno M."/>
            <person name="Moestl D."/>
            <person name="Nakai S."/>
            <person name="Noback M."/>
            <person name="Noone D."/>
            <person name="O'Reilly M."/>
            <person name="Ogawa K."/>
            <person name="Ogiwara A."/>
            <person name="Oudega B."/>
            <person name="Park S.-H."/>
            <person name="Parro V."/>
            <person name="Pohl T.M."/>
            <person name="Portetelle D."/>
            <person name="Porwollik S."/>
            <person name="Prescott A.M."/>
            <person name="Presecan E."/>
            <person name="Pujic P."/>
            <person name="Purnelle B."/>
            <person name="Rapoport G."/>
            <person name="Rey M."/>
            <person name="Reynolds S."/>
            <person name="Rieger M."/>
            <person name="Rivolta C."/>
            <person name="Rocha E."/>
            <person name="Roche B."/>
            <person name="Rose M."/>
            <person name="Sadaie Y."/>
            <person name="Sato T."/>
            <person name="Scanlan E."/>
            <person name="Schleich S."/>
            <person name="Schroeter R."/>
            <person name="Scoffone F."/>
            <person name="Sekiguchi J."/>
            <person name="Sekowska A."/>
            <person name="Seror S.J."/>
            <person name="Serror P."/>
            <person name="Shin B.-S."/>
            <person name="Soldo B."/>
            <person name="Sorokin A."/>
            <person name="Tacconi E."/>
            <person name="Takagi T."/>
            <person name="Takahashi H."/>
            <person name="Takemaru K."/>
            <person name="Takeuchi M."/>
            <person name="Tamakoshi A."/>
            <person name="Tanaka T."/>
            <person name="Terpstra P."/>
            <person name="Tognoni A."/>
            <person name="Tosato V."/>
            <person name="Uchiyama S."/>
            <person name="Vandenbol M."/>
            <person name="Vannier F."/>
            <person name="Vassarotti A."/>
            <person name="Viari A."/>
            <person name="Wambutt R."/>
            <person name="Wedler E."/>
            <person name="Wedler H."/>
            <person name="Weitzenegger T."/>
            <person name="Winters P."/>
            <person name="Wipat A."/>
            <person name="Yamamoto H."/>
            <person name="Yamane K."/>
            <person name="Yasumoto K."/>
            <person name="Yata K."/>
            <person name="Yoshida K."/>
            <person name="Yoshikawa H.-F."/>
            <person name="Zumstein E."/>
            <person name="Yoshikawa H."/>
            <person name="Danchin A."/>
        </authorList>
    </citation>
    <scope>NUCLEOTIDE SEQUENCE [LARGE SCALE GENOMIC DNA]</scope>
    <source>
        <strain>168</strain>
    </source>
</reference>
<dbReference type="EMBL" id="AL009126">
    <property type="protein sequence ID" value="CAB14056.1"/>
    <property type="molecule type" value="Genomic_DNA"/>
</dbReference>
<dbReference type="RefSeq" id="NP_390021.1">
    <property type="nucleotide sequence ID" value="NC_000964.3"/>
</dbReference>
<dbReference type="RefSeq" id="WP_010886548.1">
    <property type="nucleotide sequence ID" value="NZ_OZ025638.1"/>
</dbReference>
<dbReference type="SMR" id="O31979"/>
<dbReference type="FunCoup" id="O31979">
    <property type="interactions" value="178"/>
</dbReference>
<dbReference type="STRING" id="224308.BSU21380"/>
<dbReference type="PaxDb" id="224308-BSU21380"/>
<dbReference type="EnsemblBacteria" id="CAB14056">
    <property type="protein sequence ID" value="CAB14056"/>
    <property type="gene ID" value="BSU_21380"/>
</dbReference>
<dbReference type="GeneID" id="939134"/>
<dbReference type="KEGG" id="bsu:BSU21380"/>
<dbReference type="PATRIC" id="fig|224308.179.peg.2334"/>
<dbReference type="eggNOG" id="ENOG503384R">
    <property type="taxonomic scope" value="Bacteria"/>
</dbReference>
<dbReference type="InParanoid" id="O31979"/>
<dbReference type="OrthoDB" id="2587776at2"/>
<dbReference type="BioCyc" id="BSUB:BSU21380-MONOMER"/>
<dbReference type="Proteomes" id="UP000001570">
    <property type="component" value="Chromosome"/>
</dbReference>
<name>YOMF_BACSU</name>
<proteinExistence type="predicted"/>
<feature type="chain" id="PRO_0000360590" description="SPbeta prophage-derived uncharacterized protein YomF">
    <location>
        <begin position="1"/>
        <end position="273"/>
    </location>
</feature>
<feature type="coiled-coil region" evidence="1">
    <location>
        <begin position="119"/>
        <end position="149"/>
    </location>
</feature>
<sequence length="273" mass="31750">MADFAKLYNDPILSKKRIGSVEDPYLTYNETLTIFNGRALLTEIPNREFRVEVTGDNKEWREIEDGELDDNYFKVDYLMGVVFFNASNEGKSLTFNYSGEGASFFPASRIWIKRQGNMVIETLQGLIDEAEDTIIRMNERIAECERVTKRCQEVTAWCRQATSNYEEVVENTRKIYKPSVYTYSDIFTYYPTPQIGWTVTVKETKIVYRWDGFEWVDIGTSEVYEGFNILLSATEPFNANYIWYKDASFSPEKKRVVVSDTAPDSGQVWYKTD</sequence>
<organism>
    <name type="scientific">Bacillus subtilis (strain 168)</name>
    <dbReference type="NCBI Taxonomy" id="224308"/>
    <lineage>
        <taxon>Bacteria</taxon>
        <taxon>Bacillati</taxon>
        <taxon>Bacillota</taxon>
        <taxon>Bacilli</taxon>
        <taxon>Bacillales</taxon>
        <taxon>Bacillaceae</taxon>
        <taxon>Bacillus</taxon>
    </lineage>
</organism>
<protein>
    <recommendedName>
        <fullName>SPbeta prophage-derived uncharacterized protein YomF</fullName>
    </recommendedName>
</protein>
<evidence type="ECO:0000255" key="1"/>
<gene>
    <name type="primary">yomF</name>
    <name type="ordered locus">BSU21380</name>
</gene>
<accession>O31979</accession>
<keyword id="KW-0175">Coiled coil</keyword>
<keyword id="KW-1185">Reference proteome</keyword>